<sequence length="1802" mass="215649">MMVFQSFILGNLVSLCMKIINSVVVVGLYYGFLTTFSIGPSYLFLLRARVMDEGEEGTEKKVSATTGFIAGQLMMFISIYYAPLHLALGRPHTITVLALPYLLFHFFWNNHKHFFDYGSTTRNEMRNLRIQCVFLNNLIFQLFNHFILPSSMLARLVNIYMFRCNNKMLFVTSSFVGWLIGHILFMKWVGLVLVWIQQNNSIRSNVLIRSNKYKFLVSELRNSMARIFSILLFITCVYYLGRIPSPIFTKKLKGTSETGGTKQDQEVSTEEAPFPSLFSEEREDLDKIDEMEEIRVNGKDKINKDDEFHVRTYYNYKTVSENLDGNKENSNLEFFKIKKKEDHFLWFEKPFVTLVFDYKRWNRPNRYIKNEKIQNTVRNEMSQYFFYTCQSDGKERISFTYPPTLSTFFEMIQKNIPSFTREKTPSDQVSTYWRLINEEKKENLKKEFLNRIEALDKEWSVENILEKTTRFCHNETKKEYLPKIYDPFLHGVSRGRIKKLPQFQIITETYIKKNIEGSWINKIHGILMKMNSNKFEQTIEKFNIESLSIEKKLSFFSESQEEKINSEEEIKIFKFLFDVVITDSNDQTLIKNFMDFHEINKKVPRWSYKLISELEELEGENEENVTMEPGIRSRKAKRVVVFTDTEPHNEVYTKLKDLKDNQNSDQNDEMALIRYSHQSDFRRELIKGSMRSQRRKTVIWQFFQAKVHSPLFFDRIDKLFYFSFDIWGLKKEILRNFMWKNKKNQKIDKKDEEQSKIEEKRRIEISETWDSFLFAQIIRGYLLVTQSILRKYIILPLLIIIKNSVRMLLFQFPEWSEDLKDWKREMHVKCTYNGVQLSETEFPKNWLTDGIQIKILFPFYLKPWHKSKFQSFQKARLKKIKDKGEQNDFCFLTVWGMETELPFGSAQKKPSFFEPISKQLTKRIKKFKTKSFLVLRIFKERATIFLKVAKEIKNWFLKNFLFIKGKIKDLSKRNLISLFGPREIYELNETQKDSIMSNQMIHELSVQNKSMEWTNSSLSENKIKNLINRIKTISNQIEEISKEKQNLTNSCNKLRYDSKKMESSKKIWQTFKRKNTRLIRKSIFFVKFCIEQLSIAIFLGIINIPRITTQLFFESTKTILDKYIYKTEENGEKINNKKTTIYFISTIKNLISNSNKKKISYNLCSLSQAYVFYKISQIKVSHVSKFSKLKAVLEYNRCITSFFLKNQIKDFFQEQGIFHYKLKDKTLLNSEVNHWKNWLRSNYQYNLPQIAWARLGTQKWKKKINQDYLVLNPSLTNEDSYEKKKFDNYQKKSFFEADSLLNPKHNLKKDSIYNLFCYKSINSTEKIFDMSIGIARDNCLVSCFLEKYNIRGIGEIRHRKYLDWRILNFWVTKKVNSEPWVDTKNKKKYINTKVQNYQRIDKITKTGLANKKRNFFDWMGMNEEILNHRRKNFEFFFFPEFFLFSSTYKMKPWVIPIKLLLLNFNENINVNKKITGKKKGFIPSNEKKSLRFFNLNKEEKESAGQVELESDKEKKINPESALSNHEKNIEENYEESTIKKRKNKKQYKSNTEAELDLFLTRYSRFQLRWNSFFNQKILNNVKVYCLLVRLKNPNEIAISSIERGEMSLDILMIEKNFTFAKLMKKGILIIEPVRLSVQNDGQRIIYRTIGISLVHKNKHKINKRYKKKSYIEKKTIEKSITKYQNKTVNRKKNHYDFFVPENILSPKRRREFRILICFNLKKKNARDRNSRFNKNIQNLTTVLDTKKDLAKDKNNLIKFKSFLWPNFRLEDLACMNRYWFNTTNGNHFSMIRIHMYTRFPIH</sequence>
<feature type="chain" id="PRO_0000326581" description="Protein TIC 214">
    <location>
        <begin position="1"/>
        <end position="1802"/>
    </location>
</feature>
<feature type="transmembrane region" description="Helical" evidence="2">
    <location>
        <begin position="19"/>
        <end position="39"/>
    </location>
</feature>
<feature type="transmembrane region" description="Helical" evidence="2">
    <location>
        <begin position="68"/>
        <end position="88"/>
    </location>
</feature>
<feature type="transmembrane region" description="Helical" evidence="2">
    <location>
        <begin position="91"/>
        <end position="111"/>
    </location>
</feature>
<feature type="transmembrane region" description="Helical" evidence="2">
    <location>
        <begin position="133"/>
        <end position="153"/>
    </location>
</feature>
<feature type="transmembrane region" description="Helical" evidence="2">
    <location>
        <begin position="176"/>
        <end position="196"/>
    </location>
</feature>
<feature type="transmembrane region" description="Helical" evidence="2">
    <location>
        <begin position="227"/>
        <end position="247"/>
    </location>
</feature>
<evidence type="ECO:0000250" key="1">
    <source>
        <dbReference type="UniProtKB" id="P56785"/>
    </source>
</evidence>
<evidence type="ECO:0000255" key="2"/>
<evidence type="ECO:0000305" key="3"/>
<organism>
    <name type="scientific">Nasturtium officinale</name>
    <name type="common">Watercress</name>
    <name type="synonym">Rorippa nasturtium-aquaticum</name>
    <dbReference type="NCBI Taxonomy" id="65948"/>
    <lineage>
        <taxon>Eukaryota</taxon>
        <taxon>Viridiplantae</taxon>
        <taxon>Streptophyta</taxon>
        <taxon>Embryophyta</taxon>
        <taxon>Tracheophyta</taxon>
        <taxon>Spermatophyta</taxon>
        <taxon>Magnoliopsida</taxon>
        <taxon>eudicotyledons</taxon>
        <taxon>Gunneridae</taxon>
        <taxon>Pentapetalae</taxon>
        <taxon>rosids</taxon>
        <taxon>malvids</taxon>
        <taxon>Brassicales</taxon>
        <taxon>Brassicaceae</taxon>
        <taxon>Cardamineae</taxon>
        <taxon>Nasturtium</taxon>
    </lineage>
</organism>
<geneLocation type="chloroplast"/>
<protein>
    <recommendedName>
        <fullName evidence="1">Protein TIC 214</fullName>
    </recommendedName>
    <alternativeName>
        <fullName evidence="1">Translocon at the inner envelope membrane of chloroplasts 214</fullName>
        <shortName evidence="1">AtTIC214</shortName>
    </alternativeName>
</protein>
<reference key="1">
    <citation type="submission" date="2007-03" db="EMBL/GenBank/DDBJ databases">
        <title>Sequencing analysis of Nasturtium officinale chloroplast DNA.</title>
        <authorList>
            <person name="Hosouchi T."/>
            <person name="Tsuruoka H."/>
            <person name="Kotani H."/>
        </authorList>
    </citation>
    <scope>NUCLEOTIDE SEQUENCE [LARGE SCALE GENOMIC DNA]</scope>
</reference>
<accession>A4QLZ3</accession>
<accession>A4QLY1</accession>
<gene>
    <name evidence="1" type="primary">TIC214</name>
    <name type="synonym">ycf1-A</name>
</gene>
<gene>
    <name evidence="1" type="primary">TIC214</name>
    <name type="synonym">ycf1-B</name>
</gene>
<keyword id="KW-0150">Chloroplast</keyword>
<keyword id="KW-0472">Membrane</keyword>
<keyword id="KW-0934">Plastid</keyword>
<keyword id="KW-1001">Plastid inner membrane</keyword>
<keyword id="KW-0653">Protein transport</keyword>
<keyword id="KW-0812">Transmembrane</keyword>
<keyword id="KW-1133">Transmembrane helix</keyword>
<keyword id="KW-0813">Transport</keyword>
<dbReference type="EMBL" id="AP009376">
    <property type="protein sequence ID" value="BAF50698.1"/>
    <property type="molecule type" value="Genomic_DNA"/>
</dbReference>
<dbReference type="EMBL" id="AP009376">
    <property type="protein sequence ID" value="BAF50686.1"/>
    <property type="molecule type" value="Genomic_DNA"/>
</dbReference>
<dbReference type="GO" id="GO:0009706">
    <property type="term" value="C:chloroplast inner membrane"/>
    <property type="evidence" value="ECO:0007669"/>
    <property type="project" value="UniProtKB-SubCell"/>
</dbReference>
<dbReference type="GO" id="GO:0015031">
    <property type="term" value="P:protein transport"/>
    <property type="evidence" value="ECO:0007669"/>
    <property type="project" value="UniProtKB-KW"/>
</dbReference>
<dbReference type="InterPro" id="IPR008896">
    <property type="entry name" value="TIC214"/>
</dbReference>
<dbReference type="PANTHER" id="PTHR33163:SF40">
    <property type="entry name" value="PROTEIN TIC 214"/>
    <property type="match status" value="1"/>
</dbReference>
<dbReference type="PANTHER" id="PTHR33163">
    <property type="entry name" value="PROTEIN TIC 214-RELATED"/>
    <property type="match status" value="1"/>
</dbReference>
<dbReference type="Pfam" id="PF05758">
    <property type="entry name" value="Ycf1"/>
    <property type="match status" value="1"/>
</dbReference>
<proteinExistence type="inferred from homology"/>
<name>TI214_NASOF</name>
<comment type="function">
    <text evidence="1">Involved in protein precursor import into chloroplasts. May be part of an intermediate translocation complex acting as a protein-conducting channel at the inner envelope.</text>
</comment>
<comment type="subunit">
    <text evidence="1">Part of the Tic complex.</text>
</comment>
<comment type="subcellular location">
    <subcellularLocation>
        <location evidence="1">Plastid</location>
        <location evidence="1">Chloroplast inner membrane</location>
        <topology evidence="2">Multi-pass membrane protein</topology>
    </subcellularLocation>
</comment>
<comment type="miscellaneous">
    <text>There is a partial copy of the N-terminus (positions 1-343) of ycf1 in the inverted repeat (BAF50686).</text>
</comment>
<comment type="similarity">
    <text evidence="3">Belongs to the TIC214 family.</text>
</comment>